<sequence>MAQKQKCVAMLLAGGKGSRLSALTKNLAKPAVPFGGKYRIIDFTLSNCANSGIETVGILTQYQPLELHNYIGIGNAWDLDRVSGGVTVLPPYAESSGVKWYTGTASAIYQNLNYLSQYEPEYVLILSGDHIYKMDYSKMLDYHIEKEADVSISVIEVPWDEASRFGIMNTNEEMEIVEFEEKPQFPRSNLASMGIYIFNWAILKEYLEMDARNPESSNDFGKDVLPLLLDEGKKLMAYPFEGYWKDVGTVKSLWEANMDLLRDETSLNLNDRDWRIYSVNPNEPPQYIAEKAKVEESLINEGCVIEGDVKHSVLFQGVTVEEGSMVIDSVVMPGAKIGKNVVIERAIVGSEMVIEDGTIIRPEKNVDDVVLIAEGK</sequence>
<proteinExistence type="inferred from homology"/>
<name>GLGC_BACHK</name>
<comment type="function">
    <text evidence="1">Involved in the biosynthesis of ADP-glucose, a building block required for the elongation reactions to produce glycogen. Catalyzes the reaction between ATP and alpha-D-glucose 1-phosphate (G1P) to produce pyrophosphate and ADP-Glc.</text>
</comment>
<comment type="catalytic activity">
    <reaction evidence="1">
        <text>alpha-D-glucose 1-phosphate + ATP + H(+) = ADP-alpha-D-glucose + diphosphate</text>
        <dbReference type="Rhea" id="RHEA:12120"/>
        <dbReference type="ChEBI" id="CHEBI:15378"/>
        <dbReference type="ChEBI" id="CHEBI:30616"/>
        <dbReference type="ChEBI" id="CHEBI:33019"/>
        <dbReference type="ChEBI" id="CHEBI:57498"/>
        <dbReference type="ChEBI" id="CHEBI:58601"/>
        <dbReference type="EC" id="2.7.7.27"/>
    </reaction>
</comment>
<comment type="pathway">
    <text evidence="1">Glycan biosynthesis; glycogen biosynthesis.</text>
</comment>
<comment type="subunit">
    <text evidence="1">Homotetramer.</text>
</comment>
<comment type="similarity">
    <text evidence="1">Belongs to the bacterial/plant glucose-1-phosphate adenylyltransferase family.</text>
</comment>
<gene>
    <name evidence="1" type="primary">glgC</name>
    <name type="ordered locus">BT9727_4598</name>
</gene>
<protein>
    <recommendedName>
        <fullName evidence="1">Glucose-1-phosphate adenylyltransferase</fullName>
        <ecNumber evidence="1">2.7.7.27</ecNumber>
    </recommendedName>
    <alternativeName>
        <fullName evidence="1">ADP-glucose pyrophosphorylase</fullName>
        <shortName evidence="1">ADPGlc PPase</shortName>
    </alternativeName>
    <alternativeName>
        <fullName evidence="1">ADP-glucose synthase</fullName>
    </alternativeName>
</protein>
<accession>Q6HC16</accession>
<feature type="chain" id="PRO_0000195281" description="Glucose-1-phosphate adenylyltransferase">
    <location>
        <begin position="1"/>
        <end position="376"/>
    </location>
</feature>
<feature type="binding site" evidence="1">
    <location>
        <position position="101"/>
    </location>
    <ligand>
        <name>alpha-D-glucose 1-phosphate</name>
        <dbReference type="ChEBI" id="CHEBI:58601"/>
    </ligand>
</feature>
<feature type="binding site" evidence="1">
    <location>
        <position position="166"/>
    </location>
    <ligand>
        <name>alpha-D-glucose 1-phosphate</name>
        <dbReference type="ChEBI" id="CHEBI:58601"/>
    </ligand>
</feature>
<feature type="binding site" evidence="1">
    <location>
        <begin position="181"/>
        <end position="182"/>
    </location>
    <ligand>
        <name>alpha-D-glucose 1-phosphate</name>
        <dbReference type="ChEBI" id="CHEBI:58601"/>
    </ligand>
</feature>
<feature type="binding site" evidence="1">
    <location>
        <position position="192"/>
    </location>
    <ligand>
        <name>alpha-D-glucose 1-phosphate</name>
        <dbReference type="ChEBI" id="CHEBI:58601"/>
    </ligand>
</feature>
<keyword id="KW-0067">ATP-binding</keyword>
<keyword id="KW-0119">Carbohydrate metabolism</keyword>
<keyword id="KW-0320">Glycogen biosynthesis</keyword>
<keyword id="KW-0321">Glycogen metabolism</keyword>
<keyword id="KW-0547">Nucleotide-binding</keyword>
<keyword id="KW-0548">Nucleotidyltransferase</keyword>
<keyword id="KW-0808">Transferase</keyword>
<organism>
    <name type="scientific">Bacillus thuringiensis subsp. konkukian (strain 97-27)</name>
    <dbReference type="NCBI Taxonomy" id="281309"/>
    <lineage>
        <taxon>Bacteria</taxon>
        <taxon>Bacillati</taxon>
        <taxon>Bacillota</taxon>
        <taxon>Bacilli</taxon>
        <taxon>Bacillales</taxon>
        <taxon>Bacillaceae</taxon>
        <taxon>Bacillus</taxon>
        <taxon>Bacillus cereus group</taxon>
    </lineage>
</organism>
<reference key="1">
    <citation type="journal article" date="2006" name="J. Bacteriol.">
        <title>Pathogenomic sequence analysis of Bacillus cereus and Bacillus thuringiensis isolates closely related to Bacillus anthracis.</title>
        <authorList>
            <person name="Han C.S."/>
            <person name="Xie G."/>
            <person name="Challacombe J.F."/>
            <person name="Altherr M.R."/>
            <person name="Bhotika S.S."/>
            <person name="Bruce D."/>
            <person name="Campbell C.S."/>
            <person name="Campbell M.L."/>
            <person name="Chen J."/>
            <person name="Chertkov O."/>
            <person name="Cleland C."/>
            <person name="Dimitrijevic M."/>
            <person name="Doggett N.A."/>
            <person name="Fawcett J.J."/>
            <person name="Glavina T."/>
            <person name="Goodwin L.A."/>
            <person name="Hill K.K."/>
            <person name="Hitchcock P."/>
            <person name="Jackson P.J."/>
            <person name="Keim P."/>
            <person name="Kewalramani A.R."/>
            <person name="Longmire J."/>
            <person name="Lucas S."/>
            <person name="Malfatti S."/>
            <person name="McMurry K."/>
            <person name="Meincke L.J."/>
            <person name="Misra M."/>
            <person name="Moseman B.L."/>
            <person name="Mundt M."/>
            <person name="Munk A.C."/>
            <person name="Okinaka R.T."/>
            <person name="Parson-Quintana B."/>
            <person name="Reilly L.P."/>
            <person name="Richardson P."/>
            <person name="Robinson D.L."/>
            <person name="Rubin E."/>
            <person name="Saunders E."/>
            <person name="Tapia R."/>
            <person name="Tesmer J.G."/>
            <person name="Thayer N."/>
            <person name="Thompson L.S."/>
            <person name="Tice H."/>
            <person name="Ticknor L.O."/>
            <person name="Wills P.L."/>
            <person name="Brettin T.S."/>
            <person name="Gilna P."/>
        </authorList>
    </citation>
    <scope>NUCLEOTIDE SEQUENCE [LARGE SCALE GENOMIC DNA]</scope>
    <source>
        <strain>97-27</strain>
    </source>
</reference>
<evidence type="ECO:0000255" key="1">
    <source>
        <dbReference type="HAMAP-Rule" id="MF_00624"/>
    </source>
</evidence>
<dbReference type="EC" id="2.7.7.27" evidence="1"/>
<dbReference type="EMBL" id="AE017355">
    <property type="protein sequence ID" value="AAT61001.1"/>
    <property type="molecule type" value="Genomic_DNA"/>
</dbReference>
<dbReference type="RefSeq" id="WP_000057611.1">
    <property type="nucleotide sequence ID" value="NC_005957.1"/>
</dbReference>
<dbReference type="RefSeq" id="YP_038910.1">
    <property type="nucleotide sequence ID" value="NC_005957.1"/>
</dbReference>
<dbReference type="SMR" id="Q6HC16"/>
<dbReference type="GeneID" id="45024727"/>
<dbReference type="KEGG" id="btk:BT9727_4598"/>
<dbReference type="PATRIC" id="fig|281309.8.peg.4897"/>
<dbReference type="HOGENOM" id="CLU_029499_14_0_9"/>
<dbReference type="UniPathway" id="UPA00164"/>
<dbReference type="Proteomes" id="UP000001301">
    <property type="component" value="Chromosome"/>
</dbReference>
<dbReference type="GO" id="GO:0005524">
    <property type="term" value="F:ATP binding"/>
    <property type="evidence" value="ECO:0007669"/>
    <property type="project" value="UniProtKB-KW"/>
</dbReference>
<dbReference type="GO" id="GO:0008878">
    <property type="term" value="F:glucose-1-phosphate adenylyltransferase activity"/>
    <property type="evidence" value="ECO:0007669"/>
    <property type="project" value="UniProtKB-UniRule"/>
</dbReference>
<dbReference type="GO" id="GO:0005978">
    <property type="term" value="P:glycogen biosynthetic process"/>
    <property type="evidence" value="ECO:0007669"/>
    <property type="project" value="UniProtKB-UniRule"/>
</dbReference>
<dbReference type="CDD" id="cd02508">
    <property type="entry name" value="ADP_Glucose_PP"/>
    <property type="match status" value="1"/>
</dbReference>
<dbReference type="CDD" id="cd04651">
    <property type="entry name" value="LbH_G1P_AT_C"/>
    <property type="match status" value="1"/>
</dbReference>
<dbReference type="FunFam" id="2.160.10.10:FF:000022">
    <property type="entry name" value="Glucose-1-phosphate adenylyltransferase"/>
    <property type="match status" value="1"/>
</dbReference>
<dbReference type="FunFam" id="3.90.550.10:FF:000083">
    <property type="entry name" value="Glucose-1-phosphate adenylyltransferase"/>
    <property type="match status" value="1"/>
</dbReference>
<dbReference type="Gene3D" id="2.160.10.10">
    <property type="entry name" value="Hexapeptide repeat proteins"/>
    <property type="match status" value="1"/>
</dbReference>
<dbReference type="Gene3D" id="3.90.550.10">
    <property type="entry name" value="Spore Coat Polysaccharide Biosynthesis Protein SpsA, Chain A"/>
    <property type="match status" value="1"/>
</dbReference>
<dbReference type="HAMAP" id="MF_00624">
    <property type="entry name" value="GlgC"/>
    <property type="match status" value="1"/>
</dbReference>
<dbReference type="InterPro" id="IPR011831">
    <property type="entry name" value="ADP-Glc_PPase"/>
</dbReference>
<dbReference type="InterPro" id="IPR005836">
    <property type="entry name" value="ADP_Glu_pyroP_CS"/>
</dbReference>
<dbReference type="InterPro" id="IPR023049">
    <property type="entry name" value="GlgC_bac"/>
</dbReference>
<dbReference type="InterPro" id="IPR056818">
    <property type="entry name" value="GlmU/GlgC-like_hexapep"/>
</dbReference>
<dbReference type="InterPro" id="IPR005835">
    <property type="entry name" value="NTP_transferase_dom"/>
</dbReference>
<dbReference type="InterPro" id="IPR029044">
    <property type="entry name" value="Nucleotide-diphossugar_trans"/>
</dbReference>
<dbReference type="InterPro" id="IPR011004">
    <property type="entry name" value="Trimer_LpxA-like_sf"/>
</dbReference>
<dbReference type="NCBIfam" id="TIGR02091">
    <property type="entry name" value="glgC"/>
    <property type="match status" value="1"/>
</dbReference>
<dbReference type="NCBIfam" id="NF003670">
    <property type="entry name" value="PRK05293.1"/>
    <property type="match status" value="1"/>
</dbReference>
<dbReference type="PANTHER" id="PTHR43523:SF2">
    <property type="entry name" value="GLUCOSE-1-PHOSPHATE ADENYLYLTRANSFERASE"/>
    <property type="match status" value="1"/>
</dbReference>
<dbReference type="PANTHER" id="PTHR43523">
    <property type="entry name" value="GLUCOSE-1-PHOSPHATE ADENYLYLTRANSFERASE-RELATED"/>
    <property type="match status" value="1"/>
</dbReference>
<dbReference type="Pfam" id="PF24894">
    <property type="entry name" value="Hexapep_GlmU"/>
    <property type="match status" value="1"/>
</dbReference>
<dbReference type="Pfam" id="PF00483">
    <property type="entry name" value="NTP_transferase"/>
    <property type="match status" value="1"/>
</dbReference>
<dbReference type="SUPFAM" id="SSF53448">
    <property type="entry name" value="Nucleotide-diphospho-sugar transferases"/>
    <property type="match status" value="1"/>
</dbReference>
<dbReference type="SUPFAM" id="SSF51161">
    <property type="entry name" value="Trimeric LpxA-like enzymes"/>
    <property type="match status" value="1"/>
</dbReference>
<dbReference type="PROSITE" id="PS00808">
    <property type="entry name" value="ADP_GLC_PYROPHOSPH_1"/>
    <property type="match status" value="1"/>
</dbReference>
<dbReference type="PROSITE" id="PS00809">
    <property type="entry name" value="ADP_GLC_PYROPHOSPH_2"/>
    <property type="match status" value="1"/>
</dbReference>